<evidence type="ECO:0000255" key="1"/>
<evidence type="ECO:0000305" key="2"/>
<gene>
    <name type="primary">hmeE</name>
    <name type="ordered locus">AF_0503</name>
</gene>
<proteinExistence type="evidence at protein level"/>
<accession>O29747</accession>
<reference key="1">
    <citation type="journal article" date="1997" name="Nature">
        <title>The complete genome sequence of the hyperthermophilic, sulphate-reducing archaeon Archaeoglobus fulgidus.</title>
        <authorList>
            <person name="Klenk H.-P."/>
            <person name="Clayton R.A."/>
            <person name="Tomb J.-F."/>
            <person name="White O."/>
            <person name="Nelson K.E."/>
            <person name="Ketchum K.A."/>
            <person name="Dodson R.J."/>
            <person name="Gwinn M.L."/>
            <person name="Hickey E.K."/>
            <person name="Peterson J.D."/>
            <person name="Richardson D.L."/>
            <person name="Kerlavage A.R."/>
            <person name="Graham D.E."/>
            <person name="Kyrpides N.C."/>
            <person name="Fleischmann R.D."/>
            <person name="Quackenbush J."/>
            <person name="Lee N.H."/>
            <person name="Sutton G.G."/>
            <person name="Gill S.R."/>
            <person name="Kirkness E.F."/>
            <person name="Dougherty B.A."/>
            <person name="McKenney K."/>
            <person name="Adams M.D."/>
            <person name="Loftus B.J."/>
            <person name="Peterson S.N."/>
            <person name="Reich C.I."/>
            <person name="McNeil L.K."/>
            <person name="Badger J.H."/>
            <person name="Glodek A."/>
            <person name="Zhou L."/>
            <person name="Overbeek R."/>
            <person name="Gocayne J.D."/>
            <person name="Weidman J.F."/>
            <person name="McDonald L.A."/>
            <person name="Utterback T.R."/>
            <person name="Cotton M.D."/>
            <person name="Spriggs T."/>
            <person name="Artiach P."/>
            <person name="Kaine B.P."/>
            <person name="Sykes S.M."/>
            <person name="Sadow P.W."/>
            <person name="D'Andrea K.P."/>
            <person name="Bowman C."/>
            <person name="Fujii C."/>
            <person name="Garland S.A."/>
            <person name="Mason T.M."/>
            <person name="Olsen G.J."/>
            <person name="Fraser C.M."/>
            <person name="Smith H.O."/>
            <person name="Woese C.R."/>
            <person name="Venter J.C."/>
        </authorList>
    </citation>
    <scope>NUCLEOTIDE SEQUENCE [LARGE SCALE GENOMIC DNA]</scope>
    <source>
        <strain>ATCC 49558 / DSM 4304 / JCM 9628 / NBRC 100126 / VC-16</strain>
    </source>
</reference>
<reference key="2">
    <citation type="journal article" date="2002" name="Eur. J. Biochem.">
        <title>Purification and characterization of a membrane-bound enzyme complex from the sulfate-reducing archaeon Archaeoglobus fulgidus related to heterodisulfide reductase from methanogenic archaea.</title>
        <authorList>
            <person name="Mander G.J."/>
            <person name="Duin E.C."/>
            <person name="Linder D."/>
            <person name="Stetter K.O."/>
            <person name="Hedderich R."/>
        </authorList>
    </citation>
    <scope>PROTEIN SEQUENCE OF 1-15</scope>
    <source>
        <strain>ATCC 49558 / DSM 4304 / JCM 9628 / NBRC 100126 / VC-16</strain>
    </source>
</reference>
<dbReference type="EMBL" id="AE000782">
    <property type="protein sequence ID" value="AAB90740.1"/>
    <property type="status" value="ALT_INIT"/>
    <property type="molecule type" value="Genomic_DNA"/>
</dbReference>
<dbReference type="PIR" id="G69312">
    <property type="entry name" value="G69312"/>
</dbReference>
<dbReference type="RefSeq" id="WP_048064247.1">
    <property type="nucleotide sequence ID" value="NC_000917.1"/>
</dbReference>
<dbReference type="STRING" id="224325.AF_0503"/>
<dbReference type="PaxDb" id="224325-AF_0503"/>
<dbReference type="EnsemblBacteria" id="AAB90740">
    <property type="protein sequence ID" value="AAB90740"/>
    <property type="gene ID" value="AF_0503"/>
</dbReference>
<dbReference type="GeneID" id="1483720"/>
<dbReference type="KEGG" id="afu:AF_0503"/>
<dbReference type="eggNOG" id="arCOG10385">
    <property type="taxonomic scope" value="Archaea"/>
</dbReference>
<dbReference type="HOGENOM" id="CLU_130444_0_0_2"/>
<dbReference type="OrthoDB" id="50417at2157"/>
<dbReference type="Proteomes" id="UP000002199">
    <property type="component" value="Chromosome"/>
</dbReference>
<dbReference type="GO" id="GO:0005886">
    <property type="term" value="C:plasma membrane"/>
    <property type="evidence" value="ECO:0007669"/>
    <property type="project" value="UniProtKB-SubCell"/>
</dbReference>
<dbReference type="GO" id="GO:0046872">
    <property type="term" value="F:metal ion binding"/>
    <property type="evidence" value="ECO:0007669"/>
    <property type="project" value="UniProtKB-KW"/>
</dbReference>
<dbReference type="GO" id="GO:0016491">
    <property type="term" value="F:oxidoreductase activity"/>
    <property type="evidence" value="ECO:0007669"/>
    <property type="project" value="UniProtKB-KW"/>
</dbReference>
<dbReference type="InterPro" id="IPR047668">
    <property type="entry name" value="DsrJ"/>
</dbReference>
<dbReference type="InterPro" id="IPR036280">
    <property type="entry name" value="Multihaem_cyt_sf"/>
</dbReference>
<dbReference type="NCBIfam" id="NF038038">
    <property type="entry name" value="cytoc_DsrJ"/>
    <property type="match status" value="1"/>
</dbReference>
<dbReference type="SUPFAM" id="SSF48695">
    <property type="entry name" value="Multiheme cytochromes"/>
    <property type="match status" value="1"/>
</dbReference>
<dbReference type="PROSITE" id="PS51008">
    <property type="entry name" value="MULTIHEME_CYTC"/>
    <property type="match status" value="1"/>
</dbReference>
<name>HMEE_ARCFU</name>
<sequence length="142" mass="16373">MYNKKYVIPLILVFLIGFFTPYWYNAMAGTLGHVPTLKEPAGNCVEDKDWMAANHMLLLQQWRTQAIRHGAEGGGIYHSFTTGEEYHASTNTCWSCHDSKEEFCDQCHDYVGIHPECWDCHYTPSVEKPHYSGIEELSKYFS</sequence>
<comment type="function">
    <text>Has menaquinol-oxidizing activity. HmeA, HmeB and HmeE subunits may together catalyze electron transfer from menaquinol to cytochrome c.</text>
</comment>
<comment type="subunit">
    <text>Consists of five subunits: an integral membrane subunit, a cytochrome b-like subunit, a cytochrome c subunit and two iron-sulfur subunits.</text>
</comment>
<comment type="subcellular location">
    <subcellularLocation>
        <location>Cell membrane</location>
        <topology>Single-pass membrane protein</topology>
        <orientation>Extracellular side</orientation>
    </subcellularLocation>
</comment>
<comment type="PTM">
    <text evidence="2">Binds 3 heme groups per subunit.</text>
</comment>
<comment type="sequence caution" evidence="2">
    <conflict type="erroneous initiation">
        <sequence resource="EMBL-CDS" id="AAB90740"/>
    </conflict>
</comment>
<feature type="chain" id="PRO_0000108451" description="Hdr-like menaquinol oxidoreductase cytochrome c subunit">
    <location>
        <begin position="1"/>
        <end position="142"/>
    </location>
</feature>
<feature type="topological domain" description="Cytoplasmic" evidence="1">
    <location>
        <begin position="1"/>
        <end position="6"/>
    </location>
</feature>
<feature type="transmembrane region" description="Helical" evidence="1">
    <location>
        <begin position="7"/>
        <end position="27"/>
    </location>
</feature>
<feature type="topological domain" description="Extracellular" evidence="1">
    <location>
        <begin position="28"/>
        <end position="142"/>
    </location>
</feature>
<feature type="binding site" description="covalent" evidence="1">
    <location>
        <position position="93"/>
    </location>
    <ligand>
        <name>heme</name>
        <dbReference type="ChEBI" id="CHEBI:30413"/>
        <label>1</label>
    </ligand>
</feature>
<feature type="binding site" description="covalent" evidence="1">
    <location>
        <position position="96"/>
    </location>
    <ligand>
        <name>heme</name>
        <dbReference type="ChEBI" id="CHEBI:30413"/>
        <label>1</label>
    </ligand>
</feature>
<feature type="binding site" description="axial binding residue" evidence="1">
    <location>
        <position position="97"/>
    </location>
    <ligand>
        <name>heme</name>
        <dbReference type="ChEBI" id="CHEBI:30413"/>
        <label>1</label>
    </ligand>
    <ligandPart>
        <name>Fe</name>
        <dbReference type="ChEBI" id="CHEBI:18248"/>
    </ligandPart>
</feature>
<feature type="binding site" description="covalent" evidence="1">
    <location>
        <position position="104"/>
    </location>
    <ligand>
        <name>heme</name>
        <dbReference type="ChEBI" id="CHEBI:30413"/>
        <label>2</label>
    </ligand>
</feature>
<feature type="binding site" description="covalent" evidence="1">
    <location>
        <position position="107"/>
    </location>
    <ligand>
        <name>heme</name>
        <dbReference type="ChEBI" id="CHEBI:30413"/>
        <label>2</label>
    </ligand>
</feature>
<feature type="binding site" description="axial binding residue" evidence="1">
    <location>
        <position position="108"/>
    </location>
    <ligand>
        <name>heme</name>
        <dbReference type="ChEBI" id="CHEBI:30413"/>
        <label>2</label>
    </ligand>
    <ligandPart>
        <name>Fe</name>
        <dbReference type="ChEBI" id="CHEBI:18248"/>
    </ligandPart>
</feature>
<feature type="binding site" description="covalent" evidence="1">
    <location>
        <position position="117"/>
    </location>
    <ligand>
        <name>heme</name>
        <dbReference type="ChEBI" id="CHEBI:30413"/>
        <label>3</label>
    </ligand>
</feature>
<feature type="binding site" description="covalent" evidence="1">
    <location>
        <position position="120"/>
    </location>
    <ligand>
        <name>heme</name>
        <dbReference type="ChEBI" id="CHEBI:30413"/>
        <label>3</label>
    </ligand>
</feature>
<feature type="binding site" description="axial binding residue" evidence="1">
    <location>
        <position position="121"/>
    </location>
    <ligand>
        <name>heme</name>
        <dbReference type="ChEBI" id="CHEBI:30413"/>
        <label>3</label>
    </ligand>
    <ligandPart>
        <name>Fe</name>
        <dbReference type="ChEBI" id="CHEBI:18248"/>
    </ligandPart>
</feature>
<feature type="sequence conflict" description="In Ref. 2; AA sequence." evidence="2" ref="2">
    <location>
        <position position="4"/>
    </location>
</feature>
<protein>
    <recommendedName>
        <fullName>Hdr-like menaquinol oxidoreductase cytochrome c subunit</fullName>
        <shortName>Hme subunit E</shortName>
    </recommendedName>
</protein>
<organism>
    <name type="scientific">Archaeoglobus fulgidus (strain ATCC 49558 / DSM 4304 / JCM 9628 / NBRC 100126 / VC-16)</name>
    <dbReference type="NCBI Taxonomy" id="224325"/>
    <lineage>
        <taxon>Archaea</taxon>
        <taxon>Methanobacteriati</taxon>
        <taxon>Methanobacteriota</taxon>
        <taxon>Archaeoglobi</taxon>
        <taxon>Archaeoglobales</taxon>
        <taxon>Archaeoglobaceae</taxon>
        <taxon>Archaeoglobus</taxon>
    </lineage>
</organism>
<keyword id="KW-1003">Cell membrane</keyword>
<keyword id="KW-0903">Direct protein sequencing</keyword>
<keyword id="KW-0249">Electron transport</keyword>
<keyword id="KW-0349">Heme</keyword>
<keyword id="KW-0408">Iron</keyword>
<keyword id="KW-0472">Membrane</keyword>
<keyword id="KW-0479">Metal-binding</keyword>
<keyword id="KW-0560">Oxidoreductase</keyword>
<keyword id="KW-1185">Reference proteome</keyword>
<keyword id="KW-0812">Transmembrane</keyword>
<keyword id="KW-1133">Transmembrane helix</keyword>
<keyword id="KW-0813">Transport</keyword>